<gene>
    <name evidence="5" type="primary">oxyT</name>
</gene>
<comment type="function">
    <text evidence="2 3">Involved in the biosynthesis of the tetracycline antibiotic, oxytetracycline. Catalyzes the dimethylation of 4-amino-4-de(dimethylamino)anhydrotetracycline (4-amino-ATC) to yield anhydrotetracycline (ATC) (PubMed:1134373, PubMed:18422316). Also able to catalyze the dimethylation of 7-chloro-, 6-demethyl-, 2-decarboxamido-2-nitrile-, and 4-methylamino-derivatives of 4-amino-4-de(dimethylamino)anhydrotetracycline (PubMed:1134373).</text>
</comment>
<comment type="catalytic activity">
    <reaction evidence="3">
        <text>4-amino-4-dedimethylamino-anhydrotetracycline + S-adenosyl-L-methionine = 4-methylamino-4-dedimethylamino-anhydrotetracycline + S-adenosyl-L-homocysteine + H(+)</text>
        <dbReference type="Rhea" id="RHEA:50764"/>
        <dbReference type="ChEBI" id="CHEBI:15378"/>
        <dbReference type="ChEBI" id="CHEBI:57856"/>
        <dbReference type="ChEBI" id="CHEBI:59789"/>
        <dbReference type="ChEBI" id="CHEBI:133696"/>
        <dbReference type="ChEBI" id="CHEBI:133697"/>
        <dbReference type="EC" id="2.1.1.335"/>
    </reaction>
</comment>
<comment type="catalytic activity">
    <reaction evidence="3">
        <text>4-methylamino-4-dedimethylamino-anhydrotetracycline + S-adenosyl-L-methionine = anhydrotetracycline + S-adenosyl-L-homocysteine + H(+)</text>
        <dbReference type="Rhea" id="RHEA:50768"/>
        <dbReference type="ChEBI" id="CHEBI:15378"/>
        <dbReference type="ChEBI" id="CHEBI:57856"/>
        <dbReference type="ChEBI" id="CHEBI:58032"/>
        <dbReference type="ChEBI" id="CHEBI:59789"/>
        <dbReference type="ChEBI" id="CHEBI:133696"/>
        <dbReference type="EC" id="2.1.1.335"/>
    </reaction>
</comment>
<comment type="pathway">
    <text evidence="8">Antibiotic biosynthesis; oxytetracycline biosynthesis.</text>
</comment>
<comment type="disruption phenotype">
    <text evidence="3">Cells lacking this gene are unable to produce the tetracycline intermediate anhydrotetracycline (ATC).</text>
</comment>
<comment type="similarity">
    <text evidence="1">Belongs to the class I-like SAM-binding methyltransferase superfamily. Cation-independent O-methyltransferase family.</text>
</comment>
<evidence type="ECO:0000255" key="1">
    <source>
        <dbReference type="PROSITE-ProRule" id="PRU01020"/>
    </source>
</evidence>
<evidence type="ECO:0000269" key="2">
    <source>
    </source>
</evidence>
<evidence type="ECO:0000269" key="3">
    <source>
    </source>
</evidence>
<evidence type="ECO:0000303" key="4">
    <source>
    </source>
</evidence>
<evidence type="ECO:0000303" key="5">
    <source>
    </source>
</evidence>
<evidence type="ECO:0000303" key="6">
    <source>
    </source>
</evidence>
<evidence type="ECO:0000305" key="7"/>
<evidence type="ECO:0000305" key="8">
    <source>
    </source>
</evidence>
<keyword id="KW-0045">Antibiotic biosynthesis</keyword>
<keyword id="KW-0489">Methyltransferase</keyword>
<keyword id="KW-0949">S-adenosyl-L-methionine</keyword>
<keyword id="KW-0808">Transferase</keyword>
<proteinExistence type="evidence at protein level"/>
<sequence>MTTTPLAPVAQARSLLQLTTAYHQAKALHSAVELGLFDLLADGPATAEEVKDRLRIVHPLAKEFLDALVALELLEADGDRYRNSPAAQAFLVSGASEYLGGTVLQHARKHYHVWAGLTTALQEGEAGSGAEAHGPEAYPKHYEDPERARQVMAHFDTFSSFTAEELARRVDWSGYGSFIDIGGARGNLATRVALAHPHLHGAVFDLPALAPLAGELIRERGLEGRVRFHGGDFLTDPLPSADAVVTGHVLPDWPVPQRRKLLARIHEALPSGGALVVYDLMTDPATTTVHDVLQRLNHGLIRGDSSSSSVEEYRAEIEEAGFRVRQAERIDNLLGDWLIVAVKP</sequence>
<protein>
    <recommendedName>
        <fullName evidence="6">N,N-dimethyltransferase OxyT</fullName>
        <ecNumber evidence="3">2.1.1.335</ecNumber>
    </recommendedName>
    <alternativeName>
        <fullName evidence="8">4-amino-anhydrotetracycline N(4)-methyltransferase</fullName>
    </alternativeName>
    <alternativeName>
        <fullName evidence="4">S-adenosylmethionine: dedimethylamino-4-aminoanhydrotetracycline N-methyltransferase</fullName>
    </alternativeName>
    <alternativeName>
        <fullName evidence="7">SAM-dependent methyltransferase</fullName>
    </alternativeName>
</protein>
<organism>
    <name type="scientific">Streptomyces rimosus</name>
    <dbReference type="NCBI Taxonomy" id="1927"/>
    <lineage>
        <taxon>Bacteria</taxon>
        <taxon>Bacillati</taxon>
        <taxon>Actinomycetota</taxon>
        <taxon>Actinomycetes</taxon>
        <taxon>Kitasatosporales</taxon>
        <taxon>Streptomycetaceae</taxon>
        <taxon>Streptomyces</taxon>
    </lineage>
</organism>
<accession>Q3S8P6</accession>
<name>OXYT_STRRM</name>
<feature type="chain" id="PRO_0000442358" description="N,N-dimethyltransferase OxyT">
    <location>
        <begin position="1"/>
        <end position="344"/>
    </location>
</feature>
<feature type="binding site" evidence="1">
    <location>
        <position position="205"/>
    </location>
    <ligand>
        <name>S-adenosyl-L-methionine</name>
        <dbReference type="ChEBI" id="CHEBI:59789"/>
    </ligand>
</feature>
<feature type="binding site" evidence="1">
    <location>
        <begin position="231"/>
        <end position="233"/>
    </location>
    <ligand>
        <name>S-adenosyl-L-methionine</name>
        <dbReference type="ChEBI" id="CHEBI:59789"/>
    </ligand>
</feature>
<reference key="1">
    <citation type="journal article" date="2006" name="Appl. Environ. Microbiol.">
        <title>Engineered biosynthesis of a novel amidated polyketide, using the malonamyl-specific initmguPCPB_SPHCRiation module from the oxytetracycline polyketide synthase.</title>
        <authorList>
            <person name="Zhang W."/>
            <person name="Ames B.D."/>
            <person name="Tsai S.C."/>
            <person name="Tang Y."/>
        </authorList>
    </citation>
    <scope>NUCLEOTIDE SEQUENCE [GENOMIC DNA]</scope>
</reference>
<reference key="2">
    <citation type="journal article" date="1975" name="Methods Enzymol.">
        <title>S-adenosylmethionine:dedimethylamino-4-aminoanhydrotetracycline N-methyltransferase.</title>
        <authorList>
            <person name="Miller P.A."/>
            <person name="Hash J.H."/>
        </authorList>
    </citation>
    <scope>FUNCTION</scope>
    <scope>SUBSTRATE SPECIFICITY</scope>
</reference>
<reference key="3">
    <citation type="journal article" date="2008" name="J. Am. Chem. Soc.">
        <title>Identifying the minimal enzymes required for anhydrotetracycline biosynthesis.</title>
        <authorList>
            <person name="Zhang W."/>
            <person name="Watanabe K."/>
            <person name="Cai X."/>
            <person name="Jung M.E."/>
            <person name="Tang Y."/>
            <person name="Zhan J."/>
        </authorList>
    </citation>
    <scope>FUNCTION</scope>
    <scope>CATALYTIC ACTIVITY</scope>
    <scope>DISRUPTION PHENOTYPE</scope>
    <scope>PATHWAY</scope>
</reference>
<dbReference type="EC" id="2.1.1.335" evidence="3"/>
<dbReference type="EMBL" id="DQ143963">
    <property type="protein sequence ID" value="AAZ78343.1"/>
    <property type="molecule type" value="Genomic_DNA"/>
</dbReference>
<dbReference type="RefSeq" id="WP_003981037.1">
    <property type="nucleotide sequence ID" value="NZ_SADA01000149.1"/>
</dbReference>
<dbReference type="SMR" id="Q3S8P6"/>
<dbReference type="KEGG" id="ag:AAZ78343"/>
<dbReference type="OMA" id="FWPYVFG"/>
<dbReference type="BRENDA" id="2.1.1.335">
    <property type="organism ID" value="6084"/>
</dbReference>
<dbReference type="UniPathway" id="UPA00926"/>
<dbReference type="GO" id="GO:0008171">
    <property type="term" value="F:O-methyltransferase activity"/>
    <property type="evidence" value="ECO:0007669"/>
    <property type="project" value="InterPro"/>
</dbReference>
<dbReference type="GO" id="GO:0046983">
    <property type="term" value="F:protein dimerization activity"/>
    <property type="evidence" value="ECO:0007669"/>
    <property type="project" value="InterPro"/>
</dbReference>
<dbReference type="GO" id="GO:0017000">
    <property type="term" value="P:antibiotic biosynthetic process"/>
    <property type="evidence" value="ECO:0007669"/>
    <property type="project" value="UniProtKB-KW"/>
</dbReference>
<dbReference type="GO" id="GO:0032259">
    <property type="term" value="P:methylation"/>
    <property type="evidence" value="ECO:0007669"/>
    <property type="project" value="UniProtKB-KW"/>
</dbReference>
<dbReference type="CDD" id="cd02440">
    <property type="entry name" value="AdoMet_MTases"/>
    <property type="match status" value="1"/>
</dbReference>
<dbReference type="Gene3D" id="3.40.50.150">
    <property type="entry name" value="Vaccinia Virus protein VP39"/>
    <property type="match status" value="1"/>
</dbReference>
<dbReference type="Gene3D" id="1.10.10.10">
    <property type="entry name" value="Winged helix-like DNA-binding domain superfamily/Winged helix DNA-binding domain"/>
    <property type="match status" value="1"/>
</dbReference>
<dbReference type="InterPro" id="IPR016461">
    <property type="entry name" value="COMT-like"/>
</dbReference>
<dbReference type="InterPro" id="IPR001077">
    <property type="entry name" value="O_MeTrfase_dom"/>
</dbReference>
<dbReference type="InterPro" id="IPR012967">
    <property type="entry name" value="Plant_O-MeTrfase_dimerisation"/>
</dbReference>
<dbReference type="InterPro" id="IPR029063">
    <property type="entry name" value="SAM-dependent_MTases_sf"/>
</dbReference>
<dbReference type="InterPro" id="IPR036388">
    <property type="entry name" value="WH-like_DNA-bd_sf"/>
</dbReference>
<dbReference type="InterPro" id="IPR036390">
    <property type="entry name" value="WH_DNA-bd_sf"/>
</dbReference>
<dbReference type="PANTHER" id="PTHR43712:SF2">
    <property type="entry name" value="O-METHYLTRANSFERASE CICE"/>
    <property type="match status" value="1"/>
</dbReference>
<dbReference type="PANTHER" id="PTHR43712">
    <property type="entry name" value="PUTATIVE (AFU_ORTHOLOGUE AFUA_4G14580)-RELATED"/>
    <property type="match status" value="1"/>
</dbReference>
<dbReference type="Pfam" id="PF08100">
    <property type="entry name" value="Dimerisation"/>
    <property type="match status" value="1"/>
</dbReference>
<dbReference type="Pfam" id="PF00891">
    <property type="entry name" value="Methyltransf_2"/>
    <property type="match status" value="1"/>
</dbReference>
<dbReference type="PIRSF" id="PIRSF005739">
    <property type="entry name" value="O-mtase"/>
    <property type="match status" value="1"/>
</dbReference>
<dbReference type="SUPFAM" id="SSF53335">
    <property type="entry name" value="S-adenosyl-L-methionine-dependent methyltransferases"/>
    <property type="match status" value="1"/>
</dbReference>
<dbReference type="SUPFAM" id="SSF46785">
    <property type="entry name" value="Winged helix' DNA-binding domain"/>
    <property type="match status" value="1"/>
</dbReference>
<dbReference type="PROSITE" id="PS51683">
    <property type="entry name" value="SAM_OMT_II"/>
    <property type="match status" value="1"/>
</dbReference>